<evidence type="ECO:0000255" key="1">
    <source>
        <dbReference type="HAMAP-Rule" id="MF_01682"/>
    </source>
</evidence>
<evidence type="ECO:0000305" key="2"/>
<sequence length="206" mass="22170">MTYLTTWTADARPRLLEETTDPARIAAVLAAIAVRFERWPLAPGLPAGAEAEDILAAYRSRIDALSAAEGFVLVDVAALHPSAAADWREVAAAARARFLAEHTHDDDEIRFFAAGSGVFYLHVDERVQAVRCEAGDLISVPKGTTHWFDMGVEPDFAAVRFFRAEDGWVGAFTGSDIATRIPDFDALARRSSSAAQPQAEAPAAAS</sequence>
<feature type="chain" id="PRO_0000359192" description="Acireductone dioxygenase">
    <location>
        <begin position="1"/>
        <end position="206"/>
    </location>
</feature>
<feature type="binding site" evidence="1">
    <location>
        <position position="102"/>
    </location>
    <ligand>
        <name>Fe(2+)</name>
        <dbReference type="ChEBI" id="CHEBI:29033"/>
    </ligand>
</feature>
<feature type="binding site" evidence="1">
    <location>
        <position position="102"/>
    </location>
    <ligand>
        <name>Ni(2+)</name>
        <dbReference type="ChEBI" id="CHEBI:49786"/>
    </ligand>
</feature>
<feature type="binding site" evidence="1">
    <location>
        <position position="104"/>
    </location>
    <ligand>
        <name>Fe(2+)</name>
        <dbReference type="ChEBI" id="CHEBI:29033"/>
    </ligand>
</feature>
<feature type="binding site" evidence="1">
    <location>
        <position position="104"/>
    </location>
    <ligand>
        <name>Ni(2+)</name>
        <dbReference type="ChEBI" id="CHEBI:49786"/>
    </ligand>
</feature>
<feature type="binding site" evidence="1">
    <location>
        <position position="108"/>
    </location>
    <ligand>
        <name>Fe(2+)</name>
        <dbReference type="ChEBI" id="CHEBI:29033"/>
    </ligand>
</feature>
<feature type="binding site" evidence="1">
    <location>
        <position position="108"/>
    </location>
    <ligand>
        <name>Ni(2+)</name>
        <dbReference type="ChEBI" id="CHEBI:49786"/>
    </ligand>
</feature>
<feature type="binding site" evidence="1">
    <location>
        <position position="146"/>
    </location>
    <ligand>
        <name>Fe(2+)</name>
        <dbReference type="ChEBI" id="CHEBI:29033"/>
    </ligand>
</feature>
<feature type="binding site" evidence="1">
    <location>
        <position position="146"/>
    </location>
    <ligand>
        <name>Ni(2+)</name>
        <dbReference type="ChEBI" id="CHEBI:49786"/>
    </ligand>
</feature>
<feature type="site" description="May play a role in metal incorporation in vivo" evidence="1">
    <location>
        <position position="101"/>
    </location>
</feature>
<feature type="site" description="May play a role in transmitting local conformational changes" evidence="1">
    <location>
        <position position="107"/>
    </location>
</feature>
<feature type="site" description="Important to generate the dianion" evidence="1">
    <location>
        <position position="110"/>
    </location>
</feature>
<proteinExistence type="inferred from homology"/>
<organism>
    <name type="scientific">Frankia alni (strain DSM 45986 / CECT 9034 / ACN14a)</name>
    <dbReference type="NCBI Taxonomy" id="326424"/>
    <lineage>
        <taxon>Bacteria</taxon>
        <taxon>Bacillati</taxon>
        <taxon>Actinomycetota</taxon>
        <taxon>Actinomycetes</taxon>
        <taxon>Frankiales</taxon>
        <taxon>Frankiaceae</taxon>
        <taxon>Frankia</taxon>
    </lineage>
</organism>
<dbReference type="EC" id="1.13.11.54" evidence="1"/>
<dbReference type="EC" id="1.13.11.53" evidence="1"/>
<dbReference type="EMBL" id="CT573213">
    <property type="protein sequence ID" value="CAJ60068.1"/>
    <property type="status" value="ALT_INIT"/>
    <property type="molecule type" value="Genomic_DNA"/>
</dbReference>
<dbReference type="RefSeq" id="WP_041938908.1">
    <property type="nucleotide sequence ID" value="NC_008278.1"/>
</dbReference>
<dbReference type="SMR" id="Q0RQV5"/>
<dbReference type="STRING" id="326424.FRAAL1410"/>
<dbReference type="KEGG" id="fal:FRAAL1410"/>
<dbReference type="eggNOG" id="COG1791">
    <property type="taxonomic scope" value="Bacteria"/>
</dbReference>
<dbReference type="HOGENOM" id="CLU_125400_0_0_11"/>
<dbReference type="OrthoDB" id="9795636at2"/>
<dbReference type="UniPathway" id="UPA00904">
    <property type="reaction ID" value="UER00878"/>
</dbReference>
<dbReference type="Proteomes" id="UP000000657">
    <property type="component" value="Chromosome"/>
</dbReference>
<dbReference type="GO" id="GO:0010308">
    <property type="term" value="F:acireductone dioxygenase (Ni2+-requiring) activity"/>
    <property type="evidence" value="ECO:0007669"/>
    <property type="project" value="UniProtKB-UniRule"/>
</dbReference>
<dbReference type="GO" id="GO:0010309">
    <property type="term" value="F:acireductone dioxygenase [iron(II)-requiring] activity"/>
    <property type="evidence" value="ECO:0007669"/>
    <property type="project" value="UniProtKB-UniRule"/>
</dbReference>
<dbReference type="GO" id="GO:0005506">
    <property type="term" value="F:iron ion binding"/>
    <property type="evidence" value="ECO:0007669"/>
    <property type="project" value="UniProtKB-UniRule"/>
</dbReference>
<dbReference type="GO" id="GO:0016151">
    <property type="term" value="F:nickel cation binding"/>
    <property type="evidence" value="ECO:0007669"/>
    <property type="project" value="UniProtKB-UniRule"/>
</dbReference>
<dbReference type="GO" id="GO:0019509">
    <property type="term" value="P:L-methionine salvage from methylthioadenosine"/>
    <property type="evidence" value="ECO:0007669"/>
    <property type="project" value="UniProtKB-UniRule"/>
</dbReference>
<dbReference type="GO" id="GO:0019284">
    <property type="term" value="P:L-methionine salvage from S-adenosylmethionine"/>
    <property type="evidence" value="ECO:0007669"/>
    <property type="project" value="InterPro"/>
</dbReference>
<dbReference type="CDD" id="cd02232">
    <property type="entry name" value="cupin_ARD"/>
    <property type="match status" value="1"/>
</dbReference>
<dbReference type="Gene3D" id="2.60.120.10">
    <property type="entry name" value="Jelly Rolls"/>
    <property type="match status" value="1"/>
</dbReference>
<dbReference type="HAMAP" id="MF_01682">
    <property type="entry name" value="Salvage_MtnD"/>
    <property type="match status" value="1"/>
</dbReference>
<dbReference type="InterPro" id="IPR004313">
    <property type="entry name" value="ARD"/>
</dbReference>
<dbReference type="InterPro" id="IPR023956">
    <property type="entry name" value="ARD_bac"/>
</dbReference>
<dbReference type="InterPro" id="IPR014710">
    <property type="entry name" value="RmlC-like_jellyroll"/>
</dbReference>
<dbReference type="InterPro" id="IPR011051">
    <property type="entry name" value="RmlC_Cupin_sf"/>
</dbReference>
<dbReference type="PANTHER" id="PTHR23418">
    <property type="entry name" value="ACIREDUCTONE DIOXYGENASE"/>
    <property type="match status" value="1"/>
</dbReference>
<dbReference type="PANTHER" id="PTHR23418:SF0">
    <property type="entry name" value="ACIREDUCTONE DIOXYGENASE"/>
    <property type="match status" value="1"/>
</dbReference>
<dbReference type="Pfam" id="PF03079">
    <property type="entry name" value="ARD"/>
    <property type="match status" value="1"/>
</dbReference>
<dbReference type="SUPFAM" id="SSF51182">
    <property type="entry name" value="RmlC-like cupins"/>
    <property type="match status" value="1"/>
</dbReference>
<name>MTND_FRAAA</name>
<keyword id="KW-0028">Amino-acid biosynthesis</keyword>
<keyword id="KW-0223">Dioxygenase</keyword>
<keyword id="KW-0408">Iron</keyword>
<keyword id="KW-0479">Metal-binding</keyword>
<keyword id="KW-0486">Methionine biosynthesis</keyword>
<keyword id="KW-0533">Nickel</keyword>
<keyword id="KW-0560">Oxidoreductase</keyword>
<keyword id="KW-1185">Reference proteome</keyword>
<gene>
    <name evidence="1" type="primary">mtnD</name>
    <name type="ordered locus">FRAAL1410</name>
</gene>
<protein>
    <recommendedName>
        <fullName evidence="1">Acireductone dioxygenase</fullName>
    </recommendedName>
    <alternativeName>
        <fullName evidence="1">1,2-dihydroxy-3-keto-5-methylthiopentene dioxygenase</fullName>
        <shortName evidence="1">DHK-MTPene dioxygenase</shortName>
    </alternativeName>
    <alternativeName>
        <fullName evidence="1">Acireductone dioxygenase (Fe(2+)-requiring)</fullName>
        <shortName evidence="1">ARD'</shortName>
        <shortName evidence="1">Fe-ARD</shortName>
        <ecNumber evidence="1">1.13.11.54</ecNumber>
    </alternativeName>
    <alternativeName>
        <fullName evidence="1">Acireductone dioxygenase (Ni(2+)-requiring)</fullName>
        <shortName evidence="1">ARD</shortName>
        <shortName evidence="1">Ni-ARD</shortName>
        <ecNumber evidence="1">1.13.11.53</ecNumber>
    </alternativeName>
</protein>
<accession>Q0RQV5</accession>
<reference key="1">
    <citation type="journal article" date="2007" name="Genome Res.">
        <title>Genome characteristics of facultatively symbiotic Frankia sp. strains reflect host range and host plant biogeography.</title>
        <authorList>
            <person name="Normand P."/>
            <person name="Lapierre P."/>
            <person name="Tisa L.S."/>
            <person name="Gogarten J.P."/>
            <person name="Alloisio N."/>
            <person name="Bagnarol E."/>
            <person name="Bassi C.A."/>
            <person name="Berry A.M."/>
            <person name="Bickhart D.M."/>
            <person name="Choisne N."/>
            <person name="Couloux A."/>
            <person name="Cournoyer B."/>
            <person name="Cruveiller S."/>
            <person name="Daubin V."/>
            <person name="Demange N."/>
            <person name="Francino M.P."/>
            <person name="Goltsman E."/>
            <person name="Huang Y."/>
            <person name="Kopp O.R."/>
            <person name="Labarre L."/>
            <person name="Lapidus A."/>
            <person name="Lavire C."/>
            <person name="Marechal J."/>
            <person name="Martinez M."/>
            <person name="Mastronunzio J.E."/>
            <person name="Mullin B.C."/>
            <person name="Niemann J."/>
            <person name="Pujic P."/>
            <person name="Rawnsley T."/>
            <person name="Rouy Z."/>
            <person name="Schenowitz C."/>
            <person name="Sellstedt A."/>
            <person name="Tavares F."/>
            <person name="Tomkins J.P."/>
            <person name="Vallenet D."/>
            <person name="Valverde C."/>
            <person name="Wall L.G."/>
            <person name="Wang Y."/>
            <person name="Medigue C."/>
            <person name="Benson D.R."/>
        </authorList>
    </citation>
    <scope>NUCLEOTIDE SEQUENCE [LARGE SCALE GENOMIC DNA]</scope>
    <source>
        <strain>DSM 45986 / CECT 9034 / ACN14a</strain>
    </source>
</reference>
<comment type="function">
    <text evidence="1">Catalyzes 2 different reactions between oxygen and the acireductone 1,2-dihydroxy-3-keto-5-methylthiopentene (DHK-MTPene) depending upon the metal bound in the active site. Fe-containing acireductone dioxygenase (Fe-ARD) produces formate and 2-keto-4-methylthiobutyrate (KMTB), the alpha-ketoacid precursor of methionine in the methionine recycle pathway. Ni-containing acireductone dioxygenase (Ni-ARD) produces methylthiopropionate, carbon monoxide and formate, and does not lie on the methionine recycle pathway.</text>
</comment>
<comment type="catalytic activity">
    <reaction evidence="1">
        <text>1,2-dihydroxy-5-(methylsulfanyl)pent-1-en-3-one + O2 = 3-(methylsulfanyl)propanoate + CO + formate + 2 H(+)</text>
        <dbReference type="Rhea" id="RHEA:14161"/>
        <dbReference type="ChEBI" id="CHEBI:15378"/>
        <dbReference type="ChEBI" id="CHEBI:15379"/>
        <dbReference type="ChEBI" id="CHEBI:15740"/>
        <dbReference type="ChEBI" id="CHEBI:17245"/>
        <dbReference type="ChEBI" id="CHEBI:49016"/>
        <dbReference type="ChEBI" id="CHEBI:49252"/>
        <dbReference type="EC" id="1.13.11.53"/>
    </reaction>
</comment>
<comment type="catalytic activity">
    <reaction evidence="1">
        <text>1,2-dihydroxy-5-(methylsulfanyl)pent-1-en-3-one + O2 = 4-methylsulfanyl-2-oxobutanoate + formate + 2 H(+)</text>
        <dbReference type="Rhea" id="RHEA:24504"/>
        <dbReference type="ChEBI" id="CHEBI:15378"/>
        <dbReference type="ChEBI" id="CHEBI:15379"/>
        <dbReference type="ChEBI" id="CHEBI:15740"/>
        <dbReference type="ChEBI" id="CHEBI:16723"/>
        <dbReference type="ChEBI" id="CHEBI:49252"/>
        <dbReference type="EC" id="1.13.11.54"/>
    </reaction>
</comment>
<comment type="cofactor">
    <cofactor evidence="1">
        <name>Fe(2+)</name>
        <dbReference type="ChEBI" id="CHEBI:29033"/>
    </cofactor>
    <text evidence="1">Binds 1 Fe(2+) cation per monomer.</text>
</comment>
<comment type="cofactor">
    <cofactor evidence="1">
        <name>Ni(2+)</name>
        <dbReference type="ChEBI" id="CHEBI:49786"/>
    </cofactor>
    <text evidence="1">Binds 1 nickel ion per monomer.</text>
</comment>
<comment type="pathway">
    <text evidence="1">Amino-acid biosynthesis; L-methionine biosynthesis via salvage pathway; L-methionine from S-methyl-5-thio-alpha-D-ribose 1-phosphate: step 5/6.</text>
</comment>
<comment type="subunit">
    <text evidence="1">Monomer.</text>
</comment>
<comment type="similarity">
    <text evidence="1">Belongs to the acireductone dioxygenase (ARD) family.</text>
</comment>
<comment type="sequence caution" evidence="2">
    <conflict type="erroneous initiation">
        <sequence resource="EMBL-CDS" id="CAJ60068"/>
    </conflict>
</comment>